<feature type="initiator methionine" description="Removed" evidence="1">
    <location>
        <position position="1"/>
    </location>
</feature>
<feature type="chain" id="PRO_1000008698" description="Formamidopyrimidine-DNA glycosylase">
    <location>
        <begin position="2"/>
        <end position="271"/>
    </location>
</feature>
<feature type="zinc finger region" description="FPG-type; degenerate" evidence="2">
    <location>
        <begin position="236"/>
        <end position="271"/>
    </location>
</feature>
<feature type="active site" description="Schiff-base intermediate with DNA" evidence="2">
    <location>
        <position position="2"/>
    </location>
</feature>
<feature type="active site" description="Proton donor" evidence="2">
    <location>
        <position position="3"/>
    </location>
</feature>
<feature type="active site" description="Proton donor; for beta-elimination activity" evidence="2">
    <location>
        <position position="58"/>
    </location>
</feature>
<feature type="active site" description="Proton donor; for delta-elimination activity" evidence="2">
    <location>
        <position position="261"/>
    </location>
</feature>
<feature type="binding site" evidence="2">
    <location>
        <position position="90"/>
    </location>
    <ligand>
        <name>DNA</name>
        <dbReference type="ChEBI" id="CHEBI:16991"/>
    </ligand>
</feature>
<feature type="binding site" evidence="2">
    <location>
        <position position="108"/>
    </location>
    <ligand>
        <name>DNA</name>
        <dbReference type="ChEBI" id="CHEBI:16991"/>
    </ligand>
</feature>
<feature type="binding site" evidence="2">
    <location>
        <position position="151"/>
    </location>
    <ligand>
        <name>DNA</name>
        <dbReference type="ChEBI" id="CHEBI:16991"/>
    </ligand>
</feature>
<dbReference type="EC" id="3.2.2.23" evidence="2"/>
<dbReference type="EC" id="4.2.99.18" evidence="2"/>
<dbReference type="EMBL" id="CP000157">
    <property type="protein sequence ID" value="ABC64203.1"/>
    <property type="molecule type" value="Genomic_DNA"/>
</dbReference>
<dbReference type="RefSeq" id="WP_011415030.1">
    <property type="nucleotide sequence ID" value="NC_007722.1"/>
</dbReference>
<dbReference type="SMR" id="Q2N7Y8"/>
<dbReference type="STRING" id="314225.ELI_10555"/>
<dbReference type="KEGG" id="eli:ELI_10555"/>
<dbReference type="eggNOG" id="COG0266">
    <property type="taxonomic scope" value="Bacteria"/>
</dbReference>
<dbReference type="HOGENOM" id="CLU_038423_1_1_5"/>
<dbReference type="OrthoDB" id="9800855at2"/>
<dbReference type="Proteomes" id="UP000008808">
    <property type="component" value="Chromosome"/>
</dbReference>
<dbReference type="GO" id="GO:0034039">
    <property type="term" value="F:8-oxo-7,8-dihydroguanine DNA N-glycosylase activity"/>
    <property type="evidence" value="ECO:0007669"/>
    <property type="project" value="TreeGrafter"/>
</dbReference>
<dbReference type="GO" id="GO:0140078">
    <property type="term" value="F:class I DNA-(apurinic or apyrimidinic site) endonuclease activity"/>
    <property type="evidence" value="ECO:0007669"/>
    <property type="project" value="UniProtKB-EC"/>
</dbReference>
<dbReference type="GO" id="GO:0003684">
    <property type="term" value="F:damaged DNA binding"/>
    <property type="evidence" value="ECO:0007669"/>
    <property type="project" value="InterPro"/>
</dbReference>
<dbReference type="GO" id="GO:0008270">
    <property type="term" value="F:zinc ion binding"/>
    <property type="evidence" value="ECO:0007669"/>
    <property type="project" value="UniProtKB-UniRule"/>
</dbReference>
<dbReference type="GO" id="GO:0006284">
    <property type="term" value="P:base-excision repair"/>
    <property type="evidence" value="ECO:0007669"/>
    <property type="project" value="InterPro"/>
</dbReference>
<dbReference type="CDD" id="cd08966">
    <property type="entry name" value="EcFpg-like_N"/>
    <property type="match status" value="1"/>
</dbReference>
<dbReference type="FunFam" id="1.10.8.50:FF:000003">
    <property type="entry name" value="Formamidopyrimidine-DNA glycosylase"/>
    <property type="match status" value="1"/>
</dbReference>
<dbReference type="Gene3D" id="1.10.8.50">
    <property type="match status" value="1"/>
</dbReference>
<dbReference type="Gene3D" id="3.20.190.10">
    <property type="entry name" value="MutM-like, N-terminal"/>
    <property type="match status" value="1"/>
</dbReference>
<dbReference type="HAMAP" id="MF_00103">
    <property type="entry name" value="Fapy_DNA_glycosyl"/>
    <property type="match status" value="1"/>
</dbReference>
<dbReference type="InterPro" id="IPR015886">
    <property type="entry name" value="DNA_glyclase/AP_lyase_DNA-bd"/>
</dbReference>
<dbReference type="InterPro" id="IPR020629">
    <property type="entry name" value="Formamido-pyr_DNA_Glyclase"/>
</dbReference>
<dbReference type="InterPro" id="IPR012319">
    <property type="entry name" value="FPG_cat"/>
</dbReference>
<dbReference type="InterPro" id="IPR035937">
    <property type="entry name" value="MutM-like_N-ter"/>
</dbReference>
<dbReference type="InterPro" id="IPR010979">
    <property type="entry name" value="Ribosomal_uS13-like_H2TH"/>
</dbReference>
<dbReference type="InterPro" id="IPR000214">
    <property type="entry name" value="Znf_DNA_glyclase/AP_lyase"/>
</dbReference>
<dbReference type="InterPro" id="IPR010663">
    <property type="entry name" value="Znf_FPG/IleRS"/>
</dbReference>
<dbReference type="NCBIfam" id="TIGR00577">
    <property type="entry name" value="fpg"/>
    <property type="match status" value="1"/>
</dbReference>
<dbReference type="NCBIfam" id="NF002211">
    <property type="entry name" value="PRK01103.1"/>
    <property type="match status" value="1"/>
</dbReference>
<dbReference type="PANTHER" id="PTHR22993">
    <property type="entry name" value="FORMAMIDOPYRIMIDINE-DNA GLYCOSYLASE"/>
    <property type="match status" value="1"/>
</dbReference>
<dbReference type="PANTHER" id="PTHR22993:SF9">
    <property type="entry name" value="FORMAMIDOPYRIMIDINE-DNA GLYCOSYLASE"/>
    <property type="match status" value="1"/>
</dbReference>
<dbReference type="Pfam" id="PF01149">
    <property type="entry name" value="Fapy_DNA_glyco"/>
    <property type="match status" value="1"/>
</dbReference>
<dbReference type="Pfam" id="PF06831">
    <property type="entry name" value="H2TH"/>
    <property type="match status" value="1"/>
</dbReference>
<dbReference type="Pfam" id="PF06827">
    <property type="entry name" value="zf-FPG_IleRS"/>
    <property type="match status" value="1"/>
</dbReference>
<dbReference type="SMART" id="SM00898">
    <property type="entry name" value="Fapy_DNA_glyco"/>
    <property type="match status" value="1"/>
</dbReference>
<dbReference type="SMART" id="SM01232">
    <property type="entry name" value="H2TH"/>
    <property type="match status" value="1"/>
</dbReference>
<dbReference type="SUPFAM" id="SSF57716">
    <property type="entry name" value="Glucocorticoid receptor-like (DNA-binding domain)"/>
    <property type="match status" value="1"/>
</dbReference>
<dbReference type="SUPFAM" id="SSF81624">
    <property type="entry name" value="N-terminal domain of MutM-like DNA repair proteins"/>
    <property type="match status" value="1"/>
</dbReference>
<dbReference type="SUPFAM" id="SSF46946">
    <property type="entry name" value="S13-like H2TH domain"/>
    <property type="match status" value="1"/>
</dbReference>
<dbReference type="PROSITE" id="PS51068">
    <property type="entry name" value="FPG_CAT"/>
    <property type="match status" value="1"/>
</dbReference>
<dbReference type="PROSITE" id="PS51066">
    <property type="entry name" value="ZF_FPG_2"/>
    <property type="match status" value="1"/>
</dbReference>
<comment type="function">
    <text evidence="2">Involved in base excision repair of DNA damaged by oxidation or by mutagenic agents. Acts as a DNA glycosylase that recognizes and removes damaged bases. Has a preference for oxidized purines, such as 7,8-dihydro-8-oxoguanine (8-oxoG). Has AP (apurinic/apyrimidinic) lyase activity and introduces nicks in the DNA strand. Cleaves the DNA backbone by beta-delta elimination to generate a single-strand break at the site of the removed base with both 3'- and 5'-phosphates.</text>
</comment>
<comment type="catalytic activity">
    <reaction evidence="2">
        <text>Hydrolysis of DNA containing ring-opened 7-methylguanine residues, releasing 2,6-diamino-4-hydroxy-5-(N-methyl)formamidopyrimidine.</text>
        <dbReference type="EC" id="3.2.2.23"/>
    </reaction>
</comment>
<comment type="catalytic activity">
    <reaction evidence="2">
        <text>2'-deoxyribonucleotide-(2'-deoxyribose 5'-phosphate)-2'-deoxyribonucleotide-DNA = a 3'-end 2'-deoxyribonucleotide-(2,3-dehydro-2,3-deoxyribose 5'-phosphate)-DNA + a 5'-end 5'-phospho-2'-deoxyribonucleoside-DNA + H(+)</text>
        <dbReference type="Rhea" id="RHEA:66592"/>
        <dbReference type="Rhea" id="RHEA-COMP:13180"/>
        <dbReference type="Rhea" id="RHEA-COMP:16897"/>
        <dbReference type="Rhea" id="RHEA-COMP:17067"/>
        <dbReference type="ChEBI" id="CHEBI:15378"/>
        <dbReference type="ChEBI" id="CHEBI:136412"/>
        <dbReference type="ChEBI" id="CHEBI:157695"/>
        <dbReference type="ChEBI" id="CHEBI:167181"/>
        <dbReference type="EC" id="4.2.99.18"/>
    </reaction>
</comment>
<comment type="cofactor">
    <cofactor evidence="2">
        <name>Zn(2+)</name>
        <dbReference type="ChEBI" id="CHEBI:29105"/>
    </cofactor>
    <text evidence="2">Binds 1 zinc ion per subunit.</text>
</comment>
<comment type="subunit">
    <text evidence="2">Monomer.</text>
</comment>
<comment type="similarity">
    <text evidence="2">Belongs to the FPG family.</text>
</comment>
<name>FPG_ERYLH</name>
<sequence length="271" mass="30317">MPELPEVETTVRGLARFLQGERITRTVTNRPDMRFPFPDGLGQALTGATVVSLGRRAKYGLIHTDRDQTMIFHLGMSGRWRIDPDETDKHDHLLIETADHRFALCDPRRFGWVDLVGTQALDQWPGFAAMGPEPLGDALTIEHLRAALSGRKQAIKLCLLDQAIVAGLGNIYVCEALWHARIHPRKAGGRVSKQALSLLITAIRDVLEQSIRDGGSSLRDYAQPDGELGYFATRFQVYGRDGQPCHRDDGGTIRRFAQGGRSTWYCPRCQR</sequence>
<reference key="1">
    <citation type="journal article" date="2009" name="J. Bacteriol.">
        <title>Complete genome sequence of Erythrobacter litoralis HTCC2594.</title>
        <authorList>
            <person name="Oh H.M."/>
            <person name="Giovannoni S.J."/>
            <person name="Ferriera S."/>
            <person name="Johnson J."/>
            <person name="Cho J.C."/>
        </authorList>
    </citation>
    <scope>NUCLEOTIDE SEQUENCE [LARGE SCALE GENOMIC DNA]</scope>
    <source>
        <strain>HTCC2594</strain>
    </source>
</reference>
<evidence type="ECO:0000250" key="1"/>
<evidence type="ECO:0000255" key="2">
    <source>
        <dbReference type="HAMAP-Rule" id="MF_00103"/>
    </source>
</evidence>
<organism>
    <name type="scientific">Erythrobacter litoralis (strain HTCC2594)</name>
    <dbReference type="NCBI Taxonomy" id="314225"/>
    <lineage>
        <taxon>Bacteria</taxon>
        <taxon>Pseudomonadati</taxon>
        <taxon>Pseudomonadota</taxon>
        <taxon>Alphaproteobacteria</taxon>
        <taxon>Sphingomonadales</taxon>
        <taxon>Erythrobacteraceae</taxon>
        <taxon>Erythrobacter/Porphyrobacter group</taxon>
        <taxon>Erythrobacter</taxon>
    </lineage>
</organism>
<gene>
    <name evidence="2" type="primary">mutM</name>
    <name evidence="2" type="synonym">fpg</name>
    <name type="ordered locus">ELI_10555</name>
</gene>
<accession>Q2N7Y8</accession>
<keyword id="KW-0227">DNA damage</keyword>
<keyword id="KW-0234">DNA repair</keyword>
<keyword id="KW-0238">DNA-binding</keyword>
<keyword id="KW-0326">Glycosidase</keyword>
<keyword id="KW-0378">Hydrolase</keyword>
<keyword id="KW-0456">Lyase</keyword>
<keyword id="KW-0479">Metal-binding</keyword>
<keyword id="KW-0511">Multifunctional enzyme</keyword>
<keyword id="KW-1185">Reference proteome</keyword>
<keyword id="KW-0862">Zinc</keyword>
<keyword id="KW-0863">Zinc-finger</keyword>
<proteinExistence type="inferred from homology"/>
<protein>
    <recommendedName>
        <fullName evidence="2">Formamidopyrimidine-DNA glycosylase</fullName>
        <shortName evidence="2">Fapy-DNA glycosylase</shortName>
        <ecNumber evidence="2">3.2.2.23</ecNumber>
    </recommendedName>
    <alternativeName>
        <fullName evidence="2">DNA-(apurinic or apyrimidinic site) lyase MutM</fullName>
        <shortName evidence="2">AP lyase MutM</shortName>
        <ecNumber evidence="2">4.2.99.18</ecNumber>
    </alternativeName>
</protein>